<reference key="1">
    <citation type="journal article" date="1994" name="J. Bacteriol.">
        <title>Genetic organization of the mau gene cluster in Methylobacterium extorquens AM1: complete nucleotide sequence and generation and characteristics of mau mutants.</title>
        <authorList>
            <person name="Chistoserdov A.Y."/>
            <person name="Chistoserdova L.V."/>
            <person name="McIntire W.S."/>
            <person name="Lidstrom M.E."/>
        </authorList>
    </citation>
    <scope>NUCLEOTIDE SEQUENCE [GENOMIC DNA]</scope>
</reference>
<reference key="2">
    <citation type="journal article" date="2009" name="PLoS ONE">
        <title>Methylobacterium genome sequences: a reference blueprint to investigate microbial metabolism of C1 compounds from natural and industrial sources.</title>
        <authorList>
            <person name="Vuilleumier S."/>
            <person name="Chistoserdova L."/>
            <person name="Lee M.-C."/>
            <person name="Bringel F."/>
            <person name="Lajus A."/>
            <person name="Zhou Y."/>
            <person name="Gourion B."/>
            <person name="Barbe V."/>
            <person name="Chang J."/>
            <person name="Cruveiller S."/>
            <person name="Dossat C."/>
            <person name="Gillett W."/>
            <person name="Gruffaz C."/>
            <person name="Haugen E."/>
            <person name="Hourcade E."/>
            <person name="Levy R."/>
            <person name="Mangenot S."/>
            <person name="Muller E."/>
            <person name="Nadalig T."/>
            <person name="Pagni M."/>
            <person name="Penny C."/>
            <person name="Peyraud R."/>
            <person name="Robinson D.G."/>
            <person name="Roche D."/>
            <person name="Rouy Z."/>
            <person name="Saenampechek C."/>
            <person name="Salvignol G."/>
            <person name="Vallenet D."/>
            <person name="Wu Z."/>
            <person name="Marx C.J."/>
            <person name="Vorholt J.A."/>
            <person name="Olson M.V."/>
            <person name="Kaul R."/>
            <person name="Weissenbach J."/>
            <person name="Medigue C."/>
            <person name="Lidstrom M.E."/>
        </authorList>
    </citation>
    <scope>NUCLEOTIDE SEQUENCE [LARGE SCALE GENOMIC DNA]</scope>
    <source>
        <strain>ATCC 14718 / DSM 1338 / JCM 2805 / NCIMB 9133 / AM1</strain>
    </source>
</reference>
<sequence>MRAILPIPVLIAWAMVVCGGAYAVTTCSGAATATADASQQDLAALKARFRRPESVPHPKANPLTPEKVALGKALFFDPRLSRSGSVSCATCHNPSLGWSDGLTRAVGFGMVPLPRRTPPVLNLAWGTAFQWDGRADSLEAQARMPITAPDEMNMSMDLVVERLKAVPGYAPLFRNAFGSEEPIGARHVTAALATFQRTLVSGEAPFDRWALGDESAIGADAKRGFALFTGKAGCAACHSTWRFTDDSFHDIGLKAGNDLGRGKFAPPSVTAMRYAFKTPSLRDLRMEGPYMHDGQLGSLEAVLDHYIKGGEKRPSLSFEMKPFEMSERERRDLVAFLETLKAEPAAITLPQLP</sequence>
<protein>
    <recommendedName>
        <fullName>Methylamine utilization protein MauG</fullName>
        <ecNumber>1.-.-.-</ecNumber>
    </recommendedName>
</protein>
<proteinExistence type="inferred from homology"/>
<accession>Q49128</accession>
<accession>C5ATL0</accession>
<keyword id="KW-0249">Electron transport</keyword>
<keyword id="KW-0349">Heme</keyword>
<keyword id="KW-0408">Iron</keyword>
<keyword id="KW-0479">Metal-binding</keyword>
<keyword id="KW-0560">Oxidoreductase</keyword>
<keyword id="KW-0574">Periplasm</keyword>
<keyword id="KW-1185">Reference proteome</keyword>
<keyword id="KW-0732">Signal</keyword>
<keyword id="KW-0813">Transport</keyword>
<gene>
    <name type="primary">mauG</name>
    <name type="ordered locus">MexAM1_META1p2776</name>
</gene>
<name>MAUG_METEA</name>
<feature type="signal peptide" evidence="1">
    <location>
        <begin position="1"/>
        <end position="23"/>
    </location>
</feature>
<feature type="chain" id="PRO_0000006600" description="Methylamine utilization protein MauG">
    <location>
        <begin position="24"/>
        <end position="353"/>
    </location>
</feature>
<feature type="binding site" description="covalent" evidence="2">
    <location>
        <position position="88"/>
    </location>
    <ligand>
        <name>heme c</name>
        <dbReference type="ChEBI" id="CHEBI:61717"/>
        <label>1</label>
    </ligand>
</feature>
<feature type="binding site" description="covalent" evidence="2">
    <location>
        <position position="91"/>
    </location>
    <ligand>
        <name>heme c</name>
        <dbReference type="ChEBI" id="CHEBI:61717"/>
        <label>1</label>
    </ligand>
</feature>
<feature type="binding site" description="axial binding residue" evidence="2">
    <location>
        <position position="92"/>
    </location>
    <ligand>
        <name>heme c</name>
        <dbReference type="ChEBI" id="CHEBI:61717"/>
        <label>1</label>
    </ligand>
    <ligandPart>
        <name>Fe</name>
        <dbReference type="ChEBI" id="CHEBI:18248"/>
    </ligandPart>
</feature>
<feature type="binding site" description="covalent" evidence="2">
    <location>
        <position position="234"/>
    </location>
    <ligand>
        <name>heme c</name>
        <dbReference type="ChEBI" id="CHEBI:61717"/>
        <label>2</label>
    </ligand>
</feature>
<feature type="binding site" description="covalent" evidence="2">
    <location>
        <position position="237"/>
    </location>
    <ligand>
        <name>heme c</name>
        <dbReference type="ChEBI" id="CHEBI:61717"/>
        <label>2</label>
    </ligand>
</feature>
<feature type="binding site" description="axial binding residue" evidence="2">
    <location>
        <position position="238"/>
    </location>
    <ligand>
        <name>heme c</name>
        <dbReference type="ChEBI" id="CHEBI:61717"/>
        <label>2</label>
    </ligand>
    <ligandPart>
        <name>Fe</name>
        <dbReference type="ChEBI" id="CHEBI:18248"/>
    </ligandPart>
</feature>
<feature type="binding site" description="axial binding residue" evidence="2">
    <location>
        <position position="292"/>
    </location>
    <ligand>
        <name>heme c</name>
        <dbReference type="ChEBI" id="CHEBI:61717"/>
        <label>1</label>
    </ligand>
    <ligandPart>
        <name>Fe</name>
        <dbReference type="ChEBI" id="CHEBI:18248"/>
    </ligandPart>
</feature>
<evidence type="ECO:0000255" key="1"/>
<evidence type="ECO:0000255" key="2">
    <source>
        <dbReference type="PROSITE-ProRule" id="PRU00433"/>
    </source>
</evidence>
<evidence type="ECO:0000305" key="3"/>
<organism>
    <name type="scientific">Methylorubrum extorquens (strain ATCC 14718 / DSM 1338 / JCM 2805 / NCIMB 9133 / AM1)</name>
    <name type="common">Methylobacterium extorquens</name>
    <dbReference type="NCBI Taxonomy" id="272630"/>
    <lineage>
        <taxon>Bacteria</taxon>
        <taxon>Pseudomonadati</taxon>
        <taxon>Pseudomonadota</taxon>
        <taxon>Alphaproteobacteria</taxon>
        <taxon>Hyphomicrobiales</taxon>
        <taxon>Methylobacteriaceae</taxon>
        <taxon>Methylorubrum</taxon>
    </lineage>
</organism>
<dbReference type="EC" id="1.-.-.-"/>
<dbReference type="EMBL" id="L26406">
    <property type="protein sequence ID" value="AAB46939.1"/>
    <property type="molecule type" value="Genomic_DNA"/>
</dbReference>
<dbReference type="EMBL" id="CP001510">
    <property type="protein sequence ID" value="ACS40534.1"/>
    <property type="molecule type" value="Genomic_DNA"/>
</dbReference>
<dbReference type="RefSeq" id="WP_012753049.1">
    <property type="nucleotide sequence ID" value="NC_012808.1"/>
</dbReference>
<dbReference type="SMR" id="Q49128"/>
<dbReference type="STRING" id="272630.MexAM1_META1p2776"/>
<dbReference type="PeroxiBase" id="5005">
    <property type="entry name" value="MexMauG"/>
</dbReference>
<dbReference type="KEGG" id="mea:Mex_1p2776"/>
<dbReference type="eggNOG" id="COG1858">
    <property type="taxonomic scope" value="Bacteria"/>
</dbReference>
<dbReference type="HOGENOM" id="CLU_034652_3_1_5"/>
<dbReference type="OrthoDB" id="9805202at2"/>
<dbReference type="UniPathway" id="UPA00895"/>
<dbReference type="Proteomes" id="UP000009081">
    <property type="component" value="Chromosome"/>
</dbReference>
<dbReference type="GO" id="GO:0042597">
    <property type="term" value="C:periplasmic space"/>
    <property type="evidence" value="ECO:0007669"/>
    <property type="project" value="UniProtKB-SubCell"/>
</dbReference>
<dbReference type="GO" id="GO:0005509">
    <property type="term" value="F:calcium ion binding"/>
    <property type="evidence" value="ECO:0007669"/>
    <property type="project" value="InterPro"/>
</dbReference>
<dbReference type="GO" id="GO:0004130">
    <property type="term" value="F:cytochrome-c peroxidase activity"/>
    <property type="evidence" value="ECO:0007669"/>
    <property type="project" value="TreeGrafter"/>
</dbReference>
<dbReference type="GO" id="GO:0009055">
    <property type="term" value="F:electron transfer activity"/>
    <property type="evidence" value="ECO:0007669"/>
    <property type="project" value="InterPro"/>
</dbReference>
<dbReference type="GO" id="GO:0020037">
    <property type="term" value="F:heme binding"/>
    <property type="evidence" value="ECO:0007669"/>
    <property type="project" value="InterPro"/>
</dbReference>
<dbReference type="GO" id="GO:0030416">
    <property type="term" value="P:methylamine metabolic process"/>
    <property type="evidence" value="ECO:0007669"/>
    <property type="project" value="InterPro"/>
</dbReference>
<dbReference type="FunFam" id="1.10.760.10:FF:000019">
    <property type="entry name" value="Di-heme cytochrome C peroxidase"/>
    <property type="match status" value="1"/>
</dbReference>
<dbReference type="Gene3D" id="1.10.760.10">
    <property type="entry name" value="Cytochrome c-like domain"/>
    <property type="match status" value="2"/>
</dbReference>
<dbReference type="InterPro" id="IPR009056">
    <property type="entry name" value="Cyt_c-like_dom"/>
</dbReference>
<dbReference type="InterPro" id="IPR036909">
    <property type="entry name" value="Cyt_c-like_dom_sf"/>
</dbReference>
<dbReference type="InterPro" id="IPR051395">
    <property type="entry name" value="Cytochrome_c_Peroxidase/MauG"/>
</dbReference>
<dbReference type="InterPro" id="IPR004852">
    <property type="entry name" value="Di-haem_cyt_c_peroxidsae"/>
</dbReference>
<dbReference type="InterPro" id="IPR026259">
    <property type="entry name" value="MauG/Cytc_peroxidase"/>
</dbReference>
<dbReference type="InterPro" id="IPR022394">
    <property type="entry name" value="Methylamine_utilis_MauG"/>
</dbReference>
<dbReference type="NCBIfam" id="TIGR03791">
    <property type="entry name" value="TTQ_mauG"/>
    <property type="match status" value="1"/>
</dbReference>
<dbReference type="PANTHER" id="PTHR30600:SF10">
    <property type="entry name" value="BLL6722 PROTEIN"/>
    <property type="match status" value="1"/>
</dbReference>
<dbReference type="PANTHER" id="PTHR30600">
    <property type="entry name" value="CYTOCHROME C PEROXIDASE-RELATED"/>
    <property type="match status" value="1"/>
</dbReference>
<dbReference type="Pfam" id="PF03150">
    <property type="entry name" value="CCP_MauG"/>
    <property type="match status" value="1"/>
</dbReference>
<dbReference type="PIRSF" id="PIRSF000294">
    <property type="entry name" value="Cytochrome-c_peroxidase"/>
    <property type="match status" value="1"/>
</dbReference>
<dbReference type="SUPFAM" id="SSF46626">
    <property type="entry name" value="Cytochrome c"/>
    <property type="match status" value="2"/>
</dbReference>
<dbReference type="PROSITE" id="PS51007">
    <property type="entry name" value="CYTC"/>
    <property type="match status" value="2"/>
</dbReference>
<comment type="function">
    <text>Involved in methylamine metabolism. Essential for the maturation of the beta subunit of MADH, presumably via a step in the biosynthesis of tryptophan tryptophylquinone (TTQ), the cofactor of MADH.</text>
</comment>
<comment type="pathway">
    <text>One-carbon metabolism; methylamine degradation.</text>
</comment>
<comment type="subcellular location">
    <subcellularLocation>
        <location>Periplasm</location>
    </subcellularLocation>
</comment>
<comment type="PTM">
    <text evidence="3">Binds 2 heme c groups covalently per subunit.</text>
</comment>